<evidence type="ECO:0000255" key="1">
    <source>
        <dbReference type="HAMAP-Rule" id="MF_00823"/>
    </source>
</evidence>
<evidence type="ECO:0000255" key="2">
    <source>
        <dbReference type="PROSITE-ProRule" id="PRU01137"/>
    </source>
</evidence>
<reference key="1">
    <citation type="submission" date="2008-06" db="EMBL/GenBank/DDBJ databases">
        <title>Complete sequence of Pelodictyon phaeoclathratiforme BU-1.</title>
        <authorList>
            <consortium name="US DOE Joint Genome Institute"/>
            <person name="Lucas S."/>
            <person name="Copeland A."/>
            <person name="Lapidus A."/>
            <person name="Glavina del Rio T."/>
            <person name="Dalin E."/>
            <person name="Tice H."/>
            <person name="Bruce D."/>
            <person name="Goodwin L."/>
            <person name="Pitluck S."/>
            <person name="Schmutz J."/>
            <person name="Larimer F."/>
            <person name="Land M."/>
            <person name="Hauser L."/>
            <person name="Kyrpides N."/>
            <person name="Mikhailova N."/>
            <person name="Liu Z."/>
            <person name="Li T."/>
            <person name="Zhao F."/>
            <person name="Overmann J."/>
            <person name="Bryant D.A."/>
            <person name="Richardson P."/>
        </authorList>
    </citation>
    <scope>NUCLEOTIDE SEQUENCE [LARGE SCALE GENOMIC DNA]</scope>
    <source>
        <strain>DSM 5477 / BU-1</strain>
    </source>
</reference>
<dbReference type="EC" id="2.1.3.15" evidence="1"/>
<dbReference type="EMBL" id="CP001110">
    <property type="protein sequence ID" value="ACF44831.1"/>
    <property type="molecule type" value="Genomic_DNA"/>
</dbReference>
<dbReference type="RefSeq" id="WP_012509303.1">
    <property type="nucleotide sequence ID" value="NC_011060.1"/>
</dbReference>
<dbReference type="SMR" id="B4SG04"/>
<dbReference type="STRING" id="324925.Ppha_2672"/>
<dbReference type="KEGG" id="pph:Ppha_2672"/>
<dbReference type="eggNOG" id="COG0825">
    <property type="taxonomic scope" value="Bacteria"/>
</dbReference>
<dbReference type="HOGENOM" id="CLU_015486_0_2_10"/>
<dbReference type="OrthoDB" id="9808023at2"/>
<dbReference type="UniPathway" id="UPA00655">
    <property type="reaction ID" value="UER00711"/>
</dbReference>
<dbReference type="Proteomes" id="UP000002724">
    <property type="component" value="Chromosome"/>
</dbReference>
<dbReference type="GO" id="GO:0009317">
    <property type="term" value="C:acetyl-CoA carboxylase complex"/>
    <property type="evidence" value="ECO:0007669"/>
    <property type="project" value="InterPro"/>
</dbReference>
<dbReference type="GO" id="GO:0003989">
    <property type="term" value="F:acetyl-CoA carboxylase activity"/>
    <property type="evidence" value="ECO:0007669"/>
    <property type="project" value="InterPro"/>
</dbReference>
<dbReference type="GO" id="GO:0005524">
    <property type="term" value="F:ATP binding"/>
    <property type="evidence" value="ECO:0007669"/>
    <property type="project" value="UniProtKB-KW"/>
</dbReference>
<dbReference type="GO" id="GO:0016743">
    <property type="term" value="F:carboxyl- or carbamoyltransferase activity"/>
    <property type="evidence" value="ECO:0007669"/>
    <property type="project" value="UniProtKB-UniRule"/>
</dbReference>
<dbReference type="GO" id="GO:0006633">
    <property type="term" value="P:fatty acid biosynthetic process"/>
    <property type="evidence" value="ECO:0007669"/>
    <property type="project" value="UniProtKB-KW"/>
</dbReference>
<dbReference type="GO" id="GO:2001295">
    <property type="term" value="P:malonyl-CoA biosynthetic process"/>
    <property type="evidence" value="ECO:0007669"/>
    <property type="project" value="UniProtKB-UniRule"/>
</dbReference>
<dbReference type="Gene3D" id="3.90.226.10">
    <property type="entry name" value="2-enoyl-CoA Hydratase, Chain A, domain 1"/>
    <property type="match status" value="1"/>
</dbReference>
<dbReference type="HAMAP" id="MF_00823">
    <property type="entry name" value="AcetylCoA_CT_alpha"/>
    <property type="match status" value="1"/>
</dbReference>
<dbReference type="InterPro" id="IPR001095">
    <property type="entry name" value="Acetyl_CoA_COase_a_su"/>
</dbReference>
<dbReference type="InterPro" id="IPR029045">
    <property type="entry name" value="ClpP/crotonase-like_dom_sf"/>
</dbReference>
<dbReference type="InterPro" id="IPR011763">
    <property type="entry name" value="COA_CT_C"/>
</dbReference>
<dbReference type="NCBIfam" id="TIGR00513">
    <property type="entry name" value="accA"/>
    <property type="match status" value="1"/>
</dbReference>
<dbReference type="NCBIfam" id="NF041504">
    <property type="entry name" value="AccA_sub"/>
    <property type="match status" value="1"/>
</dbReference>
<dbReference type="NCBIfam" id="NF004344">
    <property type="entry name" value="PRK05724.1"/>
    <property type="match status" value="1"/>
</dbReference>
<dbReference type="PANTHER" id="PTHR42853">
    <property type="entry name" value="ACETYL-COENZYME A CARBOXYLASE CARBOXYL TRANSFERASE SUBUNIT ALPHA"/>
    <property type="match status" value="1"/>
</dbReference>
<dbReference type="PANTHER" id="PTHR42853:SF3">
    <property type="entry name" value="ACETYL-COENZYME A CARBOXYLASE CARBOXYL TRANSFERASE SUBUNIT ALPHA, CHLOROPLASTIC"/>
    <property type="match status" value="1"/>
</dbReference>
<dbReference type="Pfam" id="PF03255">
    <property type="entry name" value="ACCA"/>
    <property type="match status" value="1"/>
</dbReference>
<dbReference type="PRINTS" id="PR01069">
    <property type="entry name" value="ACCCTRFRASEA"/>
</dbReference>
<dbReference type="SUPFAM" id="SSF52096">
    <property type="entry name" value="ClpP/crotonase"/>
    <property type="match status" value="1"/>
</dbReference>
<dbReference type="PROSITE" id="PS50989">
    <property type="entry name" value="COA_CT_CTER"/>
    <property type="match status" value="1"/>
</dbReference>
<name>ACCA_PELPB</name>
<keyword id="KW-0067">ATP-binding</keyword>
<keyword id="KW-0963">Cytoplasm</keyword>
<keyword id="KW-0275">Fatty acid biosynthesis</keyword>
<keyword id="KW-0276">Fatty acid metabolism</keyword>
<keyword id="KW-0444">Lipid biosynthesis</keyword>
<keyword id="KW-0443">Lipid metabolism</keyword>
<keyword id="KW-0547">Nucleotide-binding</keyword>
<keyword id="KW-1185">Reference proteome</keyword>
<keyword id="KW-0808">Transferase</keyword>
<organism>
    <name type="scientific">Pelodictyon phaeoclathratiforme (strain DSM 5477 / BU-1)</name>
    <dbReference type="NCBI Taxonomy" id="324925"/>
    <lineage>
        <taxon>Bacteria</taxon>
        <taxon>Pseudomonadati</taxon>
        <taxon>Chlorobiota</taxon>
        <taxon>Chlorobiia</taxon>
        <taxon>Chlorobiales</taxon>
        <taxon>Chlorobiaceae</taxon>
        <taxon>Chlorobium/Pelodictyon group</taxon>
        <taxon>Pelodictyon</taxon>
    </lineage>
</organism>
<gene>
    <name evidence="1" type="primary">accA</name>
    <name type="ordered locus">Ppha_2672</name>
</gene>
<proteinExistence type="inferred from homology"/>
<accession>B4SG04</accession>
<protein>
    <recommendedName>
        <fullName evidence="1">Acetyl-coenzyme A carboxylase carboxyl transferase subunit alpha</fullName>
        <shortName evidence="1">ACCase subunit alpha</shortName>
        <shortName evidence="1">Acetyl-CoA carboxylase carboxyltransferase subunit alpha</shortName>
        <ecNumber evidence="1">2.1.3.15</ecNumber>
    </recommendedName>
</protein>
<comment type="function">
    <text evidence="1">Component of the acetyl coenzyme A carboxylase (ACC) complex. First, biotin carboxylase catalyzes the carboxylation of biotin on its carrier protein (BCCP) and then the CO(2) group is transferred by the carboxyltransferase to acetyl-CoA to form malonyl-CoA.</text>
</comment>
<comment type="catalytic activity">
    <reaction evidence="1">
        <text>N(6)-carboxybiotinyl-L-lysyl-[protein] + acetyl-CoA = N(6)-biotinyl-L-lysyl-[protein] + malonyl-CoA</text>
        <dbReference type="Rhea" id="RHEA:54728"/>
        <dbReference type="Rhea" id="RHEA-COMP:10505"/>
        <dbReference type="Rhea" id="RHEA-COMP:10506"/>
        <dbReference type="ChEBI" id="CHEBI:57288"/>
        <dbReference type="ChEBI" id="CHEBI:57384"/>
        <dbReference type="ChEBI" id="CHEBI:83144"/>
        <dbReference type="ChEBI" id="CHEBI:83145"/>
        <dbReference type="EC" id="2.1.3.15"/>
    </reaction>
</comment>
<comment type="pathway">
    <text evidence="1">Lipid metabolism; malonyl-CoA biosynthesis; malonyl-CoA from acetyl-CoA: step 1/1.</text>
</comment>
<comment type="subunit">
    <text evidence="1">Acetyl-CoA carboxylase is a heterohexamer composed of biotin carboxyl carrier protein (AccB), biotin carboxylase (AccC) and two subunits each of ACCase subunit alpha (AccA) and ACCase subunit beta (AccD).</text>
</comment>
<comment type="subcellular location">
    <subcellularLocation>
        <location evidence="1">Cytoplasm</location>
    </subcellularLocation>
</comment>
<comment type="similarity">
    <text evidence="1">Belongs to the AccA family.</text>
</comment>
<sequence length="335" mass="37688">MATKVVLDFEKPLFELEAKLDEMRQCLRNSTREQSPSETEMLNHDIETLELKVDALRRSIYKNLTRWQKVQLARHPARPYTLDYIHLMTRDFLELAGDRRYSDDKAIIGGFARIEESATGFSQPVMIIGHQKGRDTKSNLYRNFGMAQPEGYRKALRLMQLAEKFRKPVITLIDTPGAFPGIEAEERGTAEAIARNLYEMAKLTVPVICVIIGEGASGGAIGIGVGDRILMAENSWYSVISPESCSSILWRSWKYKEQAAEALQLTAVDLLSQGIIDRIIPEPVGGAHTDPDVMAATLKEILIEELKALLPKDPATLVHERIEKFSSMGVWNEEE</sequence>
<feature type="chain" id="PRO_1000134503" description="Acetyl-coenzyme A carboxylase carboxyl transferase subunit alpha">
    <location>
        <begin position="1"/>
        <end position="335"/>
    </location>
</feature>
<feature type="domain" description="CoA carboxyltransferase C-terminal" evidence="2">
    <location>
        <begin position="48"/>
        <end position="308"/>
    </location>
</feature>